<name>DHTK1_MOUSE</name>
<gene>
    <name type="primary">Dhtkd1</name>
    <name type="synonym">Kiaa1630</name>
</gene>
<protein>
    <recommendedName>
        <fullName>2-oxoadipate dehydrogenase complex component E1</fullName>
        <shortName evidence="1">E1a</shortName>
        <shortName>OADC-E1</shortName>
        <shortName>OADH-E1</shortName>
        <ecNumber evidence="1">1.2.4.-</ecNumber>
    </recommendedName>
    <alternativeName>
        <fullName>2-oxoadipate dehydrogenase, mitochondrial</fullName>
    </alternativeName>
    <alternativeName>
        <fullName>Alpha-ketoadipate dehydrogenase</fullName>
        <shortName>Alpha-KADH-E1</shortName>
    </alternativeName>
    <alternativeName>
        <fullName>Dehydrogenase E1 and transketolase domain-containing protein 1</fullName>
    </alternativeName>
    <alternativeName>
        <fullName>Probable 2-oxoglutarate dehydrogenase E1 component DHKTD1, mitochondrial</fullName>
    </alternativeName>
</protein>
<keyword id="KW-0324">Glycolysis</keyword>
<keyword id="KW-0496">Mitochondrion</keyword>
<keyword id="KW-0560">Oxidoreductase</keyword>
<keyword id="KW-1185">Reference proteome</keyword>
<keyword id="KW-0786">Thiamine pyrophosphate</keyword>
<keyword id="KW-0809">Transit peptide</keyword>
<evidence type="ECO:0000250" key="1">
    <source>
        <dbReference type="UniProtKB" id="Q96HY7"/>
    </source>
</evidence>
<evidence type="ECO:0000255" key="2"/>
<evidence type="ECO:0000256" key="3">
    <source>
        <dbReference type="SAM" id="MobiDB-lite"/>
    </source>
</evidence>
<evidence type="ECO:0000305" key="4"/>
<evidence type="ECO:0007744" key="5">
    <source>
    </source>
</evidence>
<feature type="transit peptide" description="Mitochondrion" evidence="2">
    <location>
        <begin position="1"/>
        <end status="unknown"/>
    </location>
</feature>
<feature type="chain" id="PRO_0000307937" description="2-oxoadipate dehydrogenase complex component E1">
    <location>
        <begin status="unknown"/>
        <end position="921"/>
    </location>
</feature>
<feature type="region of interest" description="Disordered" evidence="3">
    <location>
        <begin position="300"/>
        <end position="319"/>
    </location>
</feature>
<feature type="modified residue" description="N6-succinyllysine" evidence="5">
    <location>
        <position position="184"/>
    </location>
</feature>
<feature type="modified residue" description="N6-succinyllysine" evidence="5">
    <location>
        <position position="189"/>
    </location>
</feature>
<feature type="modified residue" description="N6-succinyllysine" evidence="5">
    <location>
        <position position="801"/>
    </location>
</feature>
<feature type="modified residue" description="N6-succinyllysine" evidence="5">
    <location>
        <position position="819"/>
    </location>
</feature>
<feature type="sequence conflict" description="In Ref. 2; AAI17995." evidence="4" ref="2">
    <original>G</original>
    <variation>S</variation>
    <location>
        <position position="24"/>
    </location>
</feature>
<feature type="sequence conflict" description="In Ref. 2; AAI17995." evidence="4" ref="2">
    <original>H</original>
    <variation>R</variation>
    <location>
        <position position="436"/>
    </location>
</feature>
<sequence length="921" mass="102793">MASAATVAAAGRALRRAVLLLRRGYQTERGVYGYRPRKAKSGEPRGDRARPSVDHGLARLVTVYCEHGHKAAQINPLFPGQALLDTVPEIQALVRTLQGPFTTTGLLNLGKEAASLEEVLAYLNHIYCGPISIETAQLQSQEERDWFARRFEELKKETFTTEERKYLSKLLLESQEFDHFLATKFATVKRYGGEGAESMMGFFHELLKLSAYGGITDIIIGMPHRGRLNLLTGLLQLPPELMFRKMRGLSEFPENVATIGDVLSHLTSSVDLDFGAHQPLHVTMLPNPSHLEAVNPVAVGKTRGRQQSREDGDYSPNGSAQPGDKVICLQVHGDASFCGQGIVLETFTLSNLPHFRIGGSIHLIVNNQLGYTTPAERGRSSLYSSDIGKLVGCAIIHVNGDSPEEVVRATRLAFEYQRQFRKDVIVDLLCYRQWGHNELDEPFFTNPVMYKIIRARKSIPDTYAEHLIASGLMTQEEVSDIKTSYYTKLNDHLANVAHYSPPATNLQARWQGLVQPEACVTTWDTGVPLELLRFIGVKSVEVPEELQVHSHLLKMYVQSRMEKVKNGSGLDWATAETLALGSLLAQGFNVRLSGQDVGRGTFSQRHAMVVCQDTDDAYIPLNHMDPNQKGFLEVSNSPLSEEAVLGFEYGMSIESPTLLPLWEAQFGDFFNGAQIIFDTFISGGEAKWLLQSGLVILLPHGYDGAGPEHSSCRIERFLQMCDSAEEGVDSDTVNMFVVHPTTPAQYFHLLRRQMIRNFRKPLIVASPKMLLRYPAAVSTLEEMAPGTAFKPVIGDSSVDPKNVKTLIFCSGKHFYALLKQRESLGTKKHDFAIIRLEELCPFPLDALQQEMSKYKHVRDVIWSQEEPQNMGPWSFVSPRFEKQLACRLRLVSRPPLPAPAVGIGTVHQQQHEDILSKTFTQ</sequence>
<organism>
    <name type="scientific">Mus musculus</name>
    <name type="common">Mouse</name>
    <dbReference type="NCBI Taxonomy" id="10090"/>
    <lineage>
        <taxon>Eukaryota</taxon>
        <taxon>Metazoa</taxon>
        <taxon>Chordata</taxon>
        <taxon>Craniata</taxon>
        <taxon>Vertebrata</taxon>
        <taxon>Euteleostomi</taxon>
        <taxon>Mammalia</taxon>
        <taxon>Eutheria</taxon>
        <taxon>Euarchontoglires</taxon>
        <taxon>Glires</taxon>
        <taxon>Rodentia</taxon>
        <taxon>Myomorpha</taxon>
        <taxon>Muroidea</taxon>
        <taxon>Muridae</taxon>
        <taxon>Murinae</taxon>
        <taxon>Mus</taxon>
        <taxon>Mus</taxon>
    </lineage>
</organism>
<reference key="1">
    <citation type="journal article" date="2009" name="PLoS Biol.">
        <title>Lineage-specific biology revealed by a finished genome assembly of the mouse.</title>
        <authorList>
            <person name="Church D.M."/>
            <person name="Goodstadt L."/>
            <person name="Hillier L.W."/>
            <person name="Zody M.C."/>
            <person name="Goldstein S."/>
            <person name="She X."/>
            <person name="Bult C.J."/>
            <person name="Agarwala R."/>
            <person name="Cherry J.L."/>
            <person name="DiCuccio M."/>
            <person name="Hlavina W."/>
            <person name="Kapustin Y."/>
            <person name="Meric P."/>
            <person name="Maglott D."/>
            <person name="Birtle Z."/>
            <person name="Marques A.C."/>
            <person name="Graves T."/>
            <person name="Zhou S."/>
            <person name="Teague B."/>
            <person name="Potamousis K."/>
            <person name="Churas C."/>
            <person name="Place M."/>
            <person name="Herschleb J."/>
            <person name="Runnheim R."/>
            <person name="Forrest D."/>
            <person name="Amos-Landgraf J."/>
            <person name="Schwartz D.C."/>
            <person name="Cheng Z."/>
            <person name="Lindblad-Toh K."/>
            <person name="Eichler E.E."/>
            <person name="Ponting C.P."/>
        </authorList>
    </citation>
    <scope>NUCLEOTIDE SEQUENCE [LARGE SCALE GENOMIC DNA]</scope>
    <source>
        <strain>C57BL/6J</strain>
    </source>
</reference>
<reference key="2">
    <citation type="journal article" date="2004" name="Genome Res.">
        <title>The status, quality, and expansion of the NIH full-length cDNA project: the Mammalian Gene Collection (MGC).</title>
        <authorList>
            <consortium name="The MGC Project Team"/>
        </authorList>
    </citation>
    <scope>NUCLEOTIDE SEQUENCE [LARGE SCALE MRNA]</scope>
</reference>
<reference key="3">
    <citation type="journal article" date="2004" name="DNA Res.">
        <title>Prediction of the coding sequences of mouse homologues of KIAA gene: IV. The complete nucleotide sequences of 500 mouse KIAA-homologous cDNAs identified by screening of terminal sequences of cDNA clones randomly sampled from size-fractionated libraries.</title>
        <authorList>
            <person name="Okazaki N."/>
            <person name="Kikuno R."/>
            <person name="Ohara R."/>
            <person name="Inamoto S."/>
            <person name="Koseki H."/>
            <person name="Hiraoka S."/>
            <person name="Saga Y."/>
            <person name="Seino S."/>
            <person name="Nishimura M."/>
            <person name="Kaisho T."/>
            <person name="Hoshino K."/>
            <person name="Kitamura H."/>
            <person name="Nagase T."/>
            <person name="Ohara O."/>
            <person name="Koga H."/>
        </authorList>
    </citation>
    <scope>NUCLEOTIDE SEQUENCE [LARGE SCALE MRNA] OF 330-587</scope>
    <source>
        <tissue>Brain</tissue>
    </source>
</reference>
<reference key="4">
    <citation type="journal article" date="2005" name="Science">
        <title>The transcriptional landscape of the mammalian genome.</title>
        <authorList>
            <person name="Carninci P."/>
            <person name="Kasukawa T."/>
            <person name="Katayama S."/>
            <person name="Gough J."/>
            <person name="Frith M.C."/>
            <person name="Maeda N."/>
            <person name="Oyama R."/>
            <person name="Ravasi T."/>
            <person name="Lenhard B."/>
            <person name="Wells C."/>
            <person name="Kodzius R."/>
            <person name="Shimokawa K."/>
            <person name="Bajic V.B."/>
            <person name="Brenner S.E."/>
            <person name="Batalov S."/>
            <person name="Forrest A.R."/>
            <person name="Zavolan M."/>
            <person name="Davis M.J."/>
            <person name="Wilming L.G."/>
            <person name="Aidinis V."/>
            <person name="Allen J.E."/>
            <person name="Ambesi-Impiombato A."/>
            <person name="Apweiler R."/>
            <person name="Aturaliya R.N."/>
            <person name="Bailey T.L."/>
            <person name="Bansal M."/>
            <person name="Baxter L."/>
            <person name="Beisel K.W."/>
            <person name="Bersano T."/>
            <person name="Bono H."/>
            <person name="Chalk A.M."/>
            <person name="Chiu K.P."/>
            <person name="Choudhary V."/>
            <person name="Christoffels A."/>
            <person name="Clutterbuck D.R."/>
            <person name="Crowe M.L."/>
            <person name="Dalla E."/>
            <person name="Dalrymple B.P."/>
            <person name="de Bono B."/>
            <person name="Della Gatta G."/>
            <person name="di Bernardo D."/>
            <person name="Down T."/>
            <person name="Engstrom P."/>
            <person name="Fagiolini M."/>
            <person name="Faulkner G."/>
            <person name="Fletcher C.F."/>
            <person name="Fukushima T."/>
            <person name="Furuno M."/>
            <person name="Futaki S."/>
            <person name="Gariboldi M."/>
            <person name="Georgii-Hemming P."/>
            <person name="Gingeras T.R."/>
            <person name="Gojobori T."/>
            <person name="Green R.E."/>
            <person name="Gustincich S."/>
            <person name="Harbers M."/>
            <person name="Hayashi Y."/>
            <person name="Hensch T.K."/>
            <person name="Hirokawa N."/>
            <person name="Hill D."/>
            <person name="Huminiecki L."/>
            <person name="Iacono M."/>
            <person name="Ikeo K."/>
            <person name="Iwama A."/>
            <person name="Ishikawa T."/>
            <person name="Jakt M."/>
            <person name="Kanapin A."/>
            <person name="Katoh M."/>
            <person name="Kawasawa Y."/>
            <person name="Kelso J."/>
            <person name="Kitamura H."/>
            <person name="Kitano H."/>
            <person name="Kollias G."/>
            <person name="Krishnan S.P."/>
            <person name="Kruger A."/>
            <person name="Kummerfeld S.K."/>
            <person name="Kurochkin I.V."/>
            <person name="Lareau L.F."/>
            <person name="Lazarevic D."/>
            <person name="Lipovich L."/>
            <person name="Liu J."/>
            <person name="Liuni S."/>
            <person name="McWilliam S."/>
            <person name="Madan Babu M."/>
            <person name="Madera M."/>
            <person name="Marchionni L."/>
            <person name="Matsuda H."/>
            <person name="Matsuzawa S."/>
            <person name="Miki H."/>
            <person name="Mignone F."/>
            <person name="Miyake S."/>
            <person name="Morris K."/>
            <person name="Mottagui-Tabar S."/>
            <person name="Mulder N."/>
            <person name="Nakano N."/>
            <person name="Nakauchi H."/>
            <person name="Ng P."/>
            <person name="Nilsson R."/>
            <person name="Nishiguchi S."/>
            <person name="Nishikawa S."/>
            <person name="Nori F."/>
            <person name="Ohara O."/>
            <person name="Okazaki Y."/>
            <person name="Orlando V."/>
            <person name="Pang K.C."/>
            <person name="Pavan W.J."/>
            <person name="Pavesi G."/>
            <person name="Pesole G."/>
            <person name="Petrovsky N."/>
            <person name="Piazza S."/>
            <person name="Reed J."/>
            <person name="Reid J.F."/>
            <person name="Ring B.Z."/>
            <person name="Ringwald M."/>
            <person name="Rost B."/>
            <person name="Ruan Y."/>
            <person name="Salzberg S.L."/>
            <person name="Sandelin A."/>
            <person name="Schneider C."/>
            <person name="Schoenbach C."/>
            <person name="Sekiguchi K."/>
            <person name="Semple C.A."/>
            <person name="Seno S."/>
            <person name="Sessa L."/>
            <person name="Sheng Y."/>
            <person name="Shibata Y."/>
            <person name="Shimada H."/>
            <person name="Shimada K."/>
            <person name="Silva D."/>
            <person name="Sinclair B."/>
            <person name="Sperling S."/>
            <person name="Stupka E."/>
            <person name="Sugiura K."/>
            <person name="Sultana R."/>
            <person name="Takenaka Y."/>
            <person name="Taki K."/>
            <person name="Tammoja K."/>
            <person name="Tan S.L."/>
            <person name="Tang S."/>
            <person name="Taylor M.S."/>
            <person name="Tegner J."/>
            <person name="Teichmann S.A."/>
            <person name="Ueda H.R."/>
            <person name="van Nimwegen E."/>
            <person name="Verardo R."/>
            <person name="Wei C.L."/>
            <person name="Yagi K."/>
            <person name="Yamanishi H."/>
            <person name="Zabarovsky E."/>
            <person name="Zhu S."/>
            <person name="Zimmer A."/>
            <person name="Hide W."/>
            <person name="Bult C."/>
            <person name="Grimmond S.M."/>
            <person name="Teasdale R.D."/>
            <person name="Liu E.T."/>
            <person name="Brusic V."/>
            <person name="Quackenbush J."/>
            <person name="Wahlestedt C."/>
            <person name="Mattick J.S."/>
            <person name="Hume D.A."/>
            <person name="Kai C."/>
            <person name="Sasaki D."/>
            <person name="Tomaru Y."/>
            <person name="Fukuda S."/>
            <person name="Kanamori-Katayama M."/>
            <person name="Suzuki M."/>
            <person name="Aoki J."/>
            <person name="Arakawa T."/>
            <person name="Iida J."/>
            <person name="Imamura K."/>
            <person name="Itoh M."/>
            <person name="Kato T."/>
            <person name="Kawaji H."/>
            <person name="Kawagashira N."/>
            <person name="Kawashima T."/>
            <person name="Kojima M."/>
            <person name="Kondo S."/>
            <person name="Konno H."/>
            <person name="Nakano K."/>
            <person name="Ninomiya N."/>
            <person name="Nishio T."/>
            <person name="Okada M."/>
            <person name="Plessy C."/>
            <person name="Shibata K."/>
            <person name="Shiraki T."/>
            <person name="Suzuki S."/>
            <person name="Tagami M."/>
            <person name="Waki K."/>
            <person name="Watahiki A."/>
            <person name="Okamura-Oho Y."/>
            <person name="Suzuki H."/>
            <person name="Kawai J."/>
            <person name="Hayashizaki Y."/>
        </authorList>
    </citation>
    <scope>NUCLEOTIDE SEQUENCE [LARGE SCALE MRNA] OF 525-921</scope>
    <source>
        <strain>C57BL/6J</strain>
        <tissue>Liver</tissue>
    </source>
</reference>
<reference key="5">
    <citation type="journal article" date="2010" name="Cell">
        <title>A tissue-specific atlas of mouse protein phosphorylation and expression.</title>
        <authorList>
            <person name="Huttlin E.L."/>
            <person name="Jedrychowski M.P."/>
            <person name="Elias J.E."/>
            <person name="Goswami T."/>
            <person name="Rad R."/>
            <person name="Beausoleil S.A."/>
            <person name="Villen J."/>
            <person name="Haas W."/>
            <person name="Sowa M.E."/>
            <person name="Gygi S.P."/>
        </authorList>
    </citation>
    <scope>IDENTIFICATION BY MASS SPECTROMETRY [LARGE SCALE ANALYSIS]</scope>
    <source>
        <tissue>Brown adipose tissue</tissue>
        <tissue>Kidney</tissue>
        <tissue>Liver</tissue>
        <tissue>Pancreas</tissue>
        <tissue>Testis</tissue>
    </source>
</reference>
<reference key="6">
    <citation type="journal article" date="2013" name="Mol. Cell">
        <title>SIRT5-mediated lysine desuccinylation impacts diverse metabolic pathways.</title>
        <authorList>
            <person name="Park J."/>
            <person name="Chen Y."/>
            <person name="Tishkoff D.X."/>
            <person name="Peng C."/>
            <person name="Tan M."/>
            <person name="Dai L."/>
            <person name="Xie Z."/>
            <person name="Zhang Y."/>
            <person name="Zwaans B.M."/>
            <person name="Skinner M.E."/>
            <person name="Lombard D.B."/>
            <person name="Zhao Y."/>
        </authorList>
    </citation>
    <scope>SUCCINYLATION [LARGE SCALE ANALYSIS] AT LYS-184; LYS-189; LYS-801 AND LYS-819</scope>
    <scope>IDENTIFICATION BY MASS SPECTROMETRY [LARGE SCALE ANALYSIS]</scope>
    <source>
        <tissue>Liver</tissue>
    </source>
</reference>
<proteinExistence type="evidence at protein level"/>
<comment type="function">
    <text evidence="1">2-oxoadipate dehydrogenase (E1a) component of the 2-oxoadipate dehydrogenase complex (OADHC). Participates in the first step, rate limiting for the overall conversion of 2-oxoadipate (alpha-ketoadipate) to glutaryl-CoA and CO(2) catalyzed by the whole OADHC. Catalyzes the irreversible decarboxylation of 2-oxoadipate via the thiamine diphosphate (ThDP) cofactor and subsequent transfer of the decarboxylated acyl intermediate on an oxidized dihydrolipoyl group that is covalently amidated to the E2 enzyme (dihydrolipoyllysine-residue succinyltransferase or DLST). Can catalyze the decarboxylation of 2-oxoglutarate in vitro, but at a much lower rate than 2-oxoadipate. Responsible for the last step of L-lysine, L-hydroxylysine and L-tryptophan catabolism with the common product being 2-oxoadipate.</text>
</comment>
<comment type="catalytic activity">
    <reaction evidence="1">
        <text>N(6)-[(R)-lipoyl]-L-lysyl-[protein] + 2-oxoadipate + H(+) = N(6)-[(R)-S(8)-glutaryldihydrolipoyl]-L-lysyl-[protein] + CO2</text>
        <dbReference type="Rhea" id="RHEA:69576"/>
        <dbReference type="Rhea" id="RHEA-COMP:10474"/>
        <dbReference type="Rhea" id="RHEA-COMP:20093"/>
        <dbReference type="ChEBI" id="CHEBI:15378"/>
        <dbReference type="ChEBI" id="CHEBI:16526"/>
        <dbReference type="ChEBI" id="CHEBI:57499"/>
        <dbReference type="ChEBI" id="CHEBI:83099"/>
        <dbReference type="ChEBI" id="CHEBI:184385"/>
    </reaction>
    <physiologicalReaction direction="left-to-right" evidence="1">
        <dbReference type="Rhea" id="RHEA:69577"/>
    </physiologicalReaction>
</comment>
<comment type="cofactor">
    <cofactor evidence="1">
        <name>thiamine diphosphate</name>
        <dbReference type="ChEBI" id="CHEBI:58937"/>
    </cofactor>
</comment>
<comment type="pathway">
    <text evidence="1">Amino-acid degradation.</text>
</comment>
<comment type="subunit">
    <text evidence="1">The 2-oxoadipate dehydrogenase complex is composed of OADH (2-oxoadipate dehydrogenase; E1a), DLST (dihydrolipoamide succinyltransferase; E2) and DLD (dihydrolipoamide dehydrogenase; E3). E1a functional unit is a dimer.</text>
</comment>
<comment type="subcellular location">
    <subcellularLocation>
        <location evidence="1">Mitochondrion</location>
    </subcellularLocation>
</comment>
<comment type="miscellaneous">
    <text evidence="1">The mitochondrial 2-oxoglutarate and 2-oxoadipate dehydrogenase complexes (OGDHC and OADHC, respectively) share their E2 (DLST) and E3 (dihydrolipoyl dehydrogenase or DLD) components, but the E1 component is specific to each complex (E1o and E1a, respectively).</text>
</comment>
<comment type="similarity">
    <text evidence="1">Belongs to the alpha-ketoglutarate dehydrogenase family.</text>
</comment>
<comment type="sequence caution" evidence="4">
    <conflict type="miscellaneous discrepancy">
        <sequence resource="EMBL-CDS" id="BAD32501"/>
    </conflict>
    <text>Intron retention.</text>
</comment>
<accession>A2ATU0</accession>
<accession>Q0VFY3</accession>
<accession>Q69ZE3</accession>
<accession>Q8BWT3</accession>
<dbReference type="EC" id="1.2.4.-" evidence="1"/>
<dbReference type="EMBL" id="AL928924">
    <property type="status" value="NOT_ANNOTATED_CDS"/>
    <property type="molecule type" value="Genomic_DNA"/>
</dbReference>
<dbReference type="EMBL" id="BC117994">
    <property type="protein sequence ID" value="AAI17995.1"/>
    <property type="molecule type" value="mRNA"/>
</dbReference>
<dbReference type="EMBL" id="AK173223">
    <property type="protein sequence ID" value="BAD32501.1"/>
    <property type="status" value="ALT_SEQ"/>
    <property type="molecule type" value="mRNA"/>
</dbReference>
<dbReference type="EMBL" id="AK050057">
    <property type="protein sequence ID" value="BAC34055.1"/>
    <property type="molecule type" value="mRNA"/>
</dbReference>
<dbReference type="CCDS" id="CCDS38040.1"/>
<dbReference type="RefSeq" id="NP_001074600.1">
    <property type="nucleotide sequence ID" value="NM_001081131.2"/>
</dbReference>
<dbReference type="SMR" id="A2ATU0"/>
<dbReference type="BioGRID" id="229102">
    <property type="interactions" value="2"/>
</dbReference>
<dbReference type="FunCoup" id="A2ATU0">
    <property type="interactions" value="1308"/>
</dbReference>
<dbReference type="STRING" id="10090.ENSMUSP00000092769"/>
<dbReference type="GlyGen" id="A2ATU0">
    <property type="glycosylation" value="1 site, 1 N-linked glycan (1 site)"/>
</dbReference>
<dbReference type="iPTMnet" id="A2ATU0"/>
<dbReference type="PhosphoSitePlus" id="A2ATU0"/>
<dbReference type="SwissPalm" id="A2ATU0"/>
<dbReference type="jPOST" id="A2ATU0"/>
<dbReference type="PaxDb" id="10090-ENSMUSP00000092769"/>
<dbReference type="PeptideAtlas" id="A2ATU0"/>
<dbReference type="ProteomicsDB" id="277452"/>
<dbReference type="Pumba" id="A2ATU0"/>
<dbReference type="Antibodypedia" id="24629">
    <property type="antibodies" value="128 antibodies from 23 providers"/>
</dbReference>
<dbReference type="Ensembl" id="ENSMUST00000095147.9">
    <property type="protein sequence ID" value="ENSMUSP00000092769.3"/>
    <property type="gene ID" value="ENSMUSG00000025815.15"/>
</dbReference>
<dbReference type="GeneID" id="209692"/>
<dbReference type="KEGG" id="mmu:209692"/>
<dbReference type="UCSC" id="uc008iga.1">
    <property type="organism name" value="mouse"/>
</dbReference>
<dbReference type="AGR" id="MGI:2445096"/>
<dbReference type="CTD" id="55526"/>
<dbReference type="MGI" id="MGI:2445096">
    <property type="gene designation" value="Dhtkd1"/>
</dbReference>
<dbReference type="VEuPathDB" id="HostDB:ENSMUSG00000025815"/>
<dbReference type="eggNOG" id="KOG0451">
    <property type="taxonomic scope" value="Eukaryota"/>
</dbReference>
<dbReference type="GeneTree" id="ENSGT00950000183125"/>
<dbReference type="HOGENOM" id="CLU_004709_0_0_1"/>
<dbReference type="InParanoid" id="A2ATU0"/>
<dbReference type="OMA" id="PAQYYHV"/>
<dbReference type="OrthoDB" id="413077at2759"/>
<dbReference type="PhylomeDB" id="A2ATU0"/>
<dbReference type="TreeFam" id="TF314198"/>
<dbReference type="Reactome" id="R-MMU-9858328">
    <property type="pathway name" value="OADH complex synthesizes glutaryl-CoA from 2-OA"/>
</dbReference>
<dbReference type="BioGRID-ORCS" id="209692">
    <property type="hits" value="1 hit in 76 CRISPR screens"/>
</dbReference>
<dbReference type="ChiTaRS" id="Dhtkd1">
    <property type="organism name" value="mouse"/>
</dbReference>
<dbReference type="PRO" id="PR:A2ATU0"/>
<dbReference type="Proteomes" id="UP000000589">
    <property type="component" value="Chromosome 2"/>
</dbReference>
<dbReference type="RNAct" id="A2ATU0">
    <property type="molecule type" value="protein"/>
</dbReference>
<dbReference type="Bgee" id="ENSMUSG00000025815">
    <property type="expression patterns" value="Expressed in animal zygote and 171 other cell types or tissues"/>
</dbReference>
<dbReference type="GO" id="GO:0005739">
    <property type="term" value="C:mitochondrion"/>
    <property type="evidence" value="ECO:0000250"/>
    <property type="project" value="UniProtKB"/>
</dbReference>
<dbReference type="GO" id="GO:0160167">
    <property type="term" value="C:oxoadipate dehydrogenase complex"/>
    <property type="evidence" value="ECO:0007669"/>
    <property type="project" value="Ensembl"/>
</dbReference>
<dbReference type="GO" id="GO:0160166">
    <property type="term" value="F:2-oxoadipate dehydrogenase activity"/>
    <property type="evidence" value="ECO:0007669"/>
    <property type="project" value="Ensembl"/>
</dbReference>
<dbReference type="GO" id="GO:0004591">
    <property type="term" value="F:oxoglutarate dehydrogenase (succinyl-transferring) activity"/>
    <property type="evidence" value="ECO:0007669"/>
    <property type="project" value="UniProtKB-EC"/>
</dbReference>
<dbReference type="GO" id="GO:0030976">
    <property type="term" value="F:thiamine pyrophosphate binding"/>
    <property type="evidence" value="ECO:0007669"/>
    <property type="project" value="InterPro"/>
</dbReference>
<dbReference type="GO" id="GO:0006091">
    <property type="term" value="P:generation of precursor metabolites and energy"/>
    <property type="evidence" value="ECO:0000250"/>
    <property type="project" value="UniProtKB"/>
</dbReference>
<dbReference type="GO" id="GO:0006096">
    <property type="term" value="P:glycolytic process"/>
    <property type="evidence" value="ECO:0007669"/>
    <property type="project" value="UniProtKB-KW"/>
</dbReference>
<dbReference type="GO" id="GO:0002244">
    <property type="term" value="P:hematopoietic progenitor cell differentiation"/>
    <property type="evidence" value="ECO:0000316"/>
    <property type="project" value="MGI"/>
</dbReference>
<dbReference type="CDD" id="cd02016">
    <property type="entry name" value="TPP_E1_OGDC_like"/>
    <property type="match status" value="1"/>
</dbReference>
<dbReference type="FunFam" id="3.40.50.11610:FF:000005">
    <property type="entry name" value="Probable 2-oxoglutarate dehydrogenase E1 component DHKTD1, mitochondrial"/>
    <property type="match status" value="1"/>
</dbReference>
<dbReference type="FunFam" id="3.40.50.970:FF:000034">
    <property type="entry name" value="Probable 2-oxoglutarate dehydrogenase E1 component DHKTD1, mitochondrial"/>
    <property type="match status" value="1"/>
</dbReference>
<dbReference type="FunFam" id="1.10.287.1150:FF:000005">
    <property type="entry name" value="probable 2-oxoglutarate dehydrogenase E1 component DHKTD1, mitochondrial"/>
    <property type="match status" value="1"/>
</dbReference>
<dbReference type="Gene3D" id="3.40.50.12470">
    <property type="match status" value="1"/>
</dbReference>
<dbReference type="Gene3D" id="3.40.50.970">
    <property type="match status" value="1"/>
</dbReference>
<dbReference type="Gene3D" id="3.40.50.11610">
    <property type="entry name" value="Multifunctional 2-oxoglutarate metabolism enzyme, C-terminal domain"/>
    <property type="match status" value="1"/>
</dbReference>
<dbReference type="Gene3D" id="1.10.287.1150">
    <property type="entry name" value="TPP helical domain"/>
    <property type="match status" value="1"/>
</dbReference>
<dbReference type="InterPro" id="IPR011603">
    <property type="entry name" value="2oxoglutarate_DH_E1"/>
</dbReference>
<dbReference type="InterPro" id="IPR001017">
    <property type="entry name" value="DH_E1"/>
</dbReference>
<dbReference type="InterPro" id="IPR042179">
    <property type="entry name" value="KGD_C_sf"/>
</dbReference>
<dbReference type="InterPro" id="IPR031717">
    <property type="entry name" value="ODO-1/KGD_C"/>
</dbReference>
<dbReference type="InterPro" id="IPR029061">
    <property type="entry name" value="THDP-binding"/>
</dbReference>
<dbReference type="InterPro" id="IPR005475">
    <property type="entry name" value="Transketolase-like_Pyr-bd"/>
</dbReference>
<dbReference type="NCBIfam" id="TIGR00239">
    <property type="entry name" value="2oxo_dh_E1"/>
    <property type="match status" value="1"/>
</dbReference>
<dbReference type="NCBIfam" id="NF006914">
    <property type="entry name" value="PRK09404.1"/>
    <property type="match status" value="1"/>
</dbReference>
<dbReference type="NCBIfam" id="NF008907">
    <property type="entry name" value="PRK12270.1"/>
    <property type="match status" value="1"/>
</dbReference>
<dbReference type="PANTHER" id="PTHR23152:SF4">
    <property type="entry name" value="2-OXOADIPATE DEHYDROGENASE COMPLEX COMPONENT E1"/>
    <property type="match status" value="1"/>
</dbReference>
<dbReference type="PANTHER" id="PTHR23152">
    <property type="entry name" value="2-OXOGLUTARATE DEHYDROGENASE"/>
    <property type="match status" value="1"/>
</dbReference>
<dbReference type="Pfam" id="PF00676">
    <property type="entry name" value="E1_dh"/>
    <property type="match status" value="1"/>
</dbReference>
<dbReference type="Pfam" id="PF16870">
    <property type="entry name" value="OxoGdeHyase_C"/>
    <property type="match status" value="1"/>
</dbReference>
<dbReference type="Pfam" id="PF02779">
    <property type="entry name" value="Transket_pyr"/>
    <property type="match status" value="1"/>
</dbReference>
<dbReference type="PIRSF" id="PIRSF000157">
    <property type="entry name" value="Oxoglu_dh_E1"/>
    <property type="match status" value="1"/>
</dbReference>
<dbReference type="SMART" id="SM00861">
    <property type="entry name" value="Transket_pyr"/>
    <property type="match status" value="1"/>
</dbReference>
<dbReference type="SUPFAM" id="SSF52518">
    <property type="entry name" value="Thiamin diphosphate-binding fold (THDP-binding)"/>
    <property type="match status" value="2"/>
</dbReference>